<accession>Q12482</accession>
<accession>D6W431</accession>
<dbReference type="EMBL" id="Z71255">
    <property type="protein sequence ID" value="CAA95017.1"/>
    <property type="molecule type" value="Genomic_DNA"/>
</dbReference>
<dbReference type="EMBL" id="Z49274">
    <property type="protein sequence ID" value="CAA89275.1"/>
    <property type="molecule type" value="Genomic_DNA"/>
</dbReference>
<dbReference type="EMBL" id="BK006949">
    <property type="protein sequence ID" value="DAA11447.1"/>
    <property type="molecule type" value="Genomic_DNA"/>
</dbReference>
<dbReference type="PIR" id="S54495">
    <property type="entry name" value="S54495"/>
</dbReference>
<dbReference type="RefSeq" id="NP_015346.1">
    <property type="nucleotide sequence ID" value="NM_001184118.1"/>
</dbReference>
<dbReference type="SMR" id="Q12482"/>
<dbReference type="BioGRID" id="36198">
    <property type="interactions" value="111"/>
</dbReference>
<dbReference type="DIP" id="DIP-8968N"/>
<dbReference type="FunCoup" id="Q12482">
    <property type="interactions" value="24"/>
</dbReference>
<dbReference type="STRING" id="4932.YPR021C"/>
<dbReference type="TCDB" id="2.A.29.14.4">
    <property type="family name" value="the mitochondrial carrier (mc) family"/>
</dbReference>
<dbReference type="iPTMnet" id="Q12482"/>
<dbReference type="PaxDb" id="4932-YPR021C"/>
<dbReference type="PeptideAtlas" id="Q12482"/>
<dbReference type="EnsemblFungi" id="YPR021C_mRNA">
    <property type="protein sequence ID" value="YPR021C"/>
    <property type="gene ID" value="YPR021C"/>
</dbReference>
<dbReference type="GeneID" id="856132"/>
<dbReference type="KEGG" id="sce:YPR021C"/>
<dbReference type="AGR" id="SGD:S000006225"/>
<dbReference type="SGD" id="S000006225">
    <property type="gene designation" value="AGC1"/>
</dbReference>
<dbReference type="VEuPathDB" id="FungiDB:YPR021C"/>
<dbReference type="eggNOG" id="KOG0751">
    <property type="taxonomic scope" value="Eukaryota"/>
</dbReference>
<dbReference type="HOGENOM" id="CLU_014931_1_0_1"/>
<dbReference type="InParanoid" id="Q12482"/>
<dbReference type="OMA" id="YYYKSCQ"/>
<dbReference type="OrthoDB" id="2161at2759"/>
<dbReference type="BioCyc" id="YEAST:G3O-34181-MONOMER"/>
<dbReference type="Reactome" id="R-SCE-428643">
    <property type="pathway name" value="Organic anion transporters"/>
</dbReference>
<dbReference type="Reactome" id="R-SCE-8963693">
    <property type="pathway name" value="Aspartate and asparagine metabolism"/>
</dbReference>
<dbReference type="Reactome" id="R-SCE-9856872">
    <property type="pathway name" value="Malate-aspartate shuttle"/>
</dbReference>
<dbReference type="BioGRID-ORCS" id="856132">
    <property type="hits" value="0 hits in 10 CRISPR screens"/>
</dbReference>
<dbReference type="PRO" id="PR:Q12482"/>
<dbReference type="Proteomes" id="UP000002311">
    <property type="component" value="Chromosome XVI"/>
</dbReference>
<dbReference type="RNAct" id="Q12482">
    <property type="molecule type" value="protein"/>
</dbReference>
<dbReference type="GO" id="GO:0005743">
    <property type="term" value="C:mitochondrial inner membrane"/>
    <property type="evidence" value="ECO:0007669"/>
    <property type="project" value="UniProtKB-SubCell"/>
</dbReference>
<dbReference type="GO" id="GO:0005739">
    <property type="term" value="C:mitochondrion"/>
    <property type="evidence" value="ECO:0007005"/>
    <property type="project" value="SGD"/>
</dbReference>
<dbReference type="GO" id="GO:1990816">
    <property type="term" value="C:vacuole-mitochondrion membrane contact site"/>
    <property type="evidence" value="ECO:0000314"/>
    <property type="project" value="SGD"/>
</dbReference>
<dbReference type="GO" id="GO:0015297">
    <property type="term" value="F:antiporter activity"/>
    <property type="evidence" value="ECO:0000314"/>
    <property type="project" value="SGD"/>
</dbReference>
<dbReference type="GO" id="GO:0015183">
    <property type="term" value="F:L-aspartate transmembrane transporter activity"/>
    <property type="evidence" value="ECO:0000314"/>
    <property type="project" value="SGD"/>
</dbReference>
<dbReference type="GO" id="GO:0005313">
    <property type="term" value="F:L-glutamate transmembrane transporter activity"/>
    <property type="evidence" value="ECO:0000314"/>
    <property type="project" value="SGD"/>
</dbReference>
<dbReference type="GO" id="GO:0015292">
    <property type="term" value="F:uniporter activity"/>
    <property type="evidence" value="ECO:0000314"/>
    <property type="project" value="SGD"/>
</dbReference>
<dbReference type="GO" id="GO:0015810">
    <property type="term" value="P:aspartate transmembrane transport"/>
    <property type="evidence" value="ECO:0000314"/>
    <property type="project" value="SGD"/>
</dbReference>
<dbReference type="GO" id="GO:0009058">
    <property type="term" value="P:biosynthetic process"/>
    <property type="evidence" value="ECO:0000315"/>
    <property type="project" value="SGD"/>
</dbReference>
<dbReference type="GO" id="GO:0015813">
    <property type="term" value="P:L-glutamate transmembrane transport"/>
    <property type="evidence" value="ECO:0000314"/>
    <property type="project" value="SGD"/>
</dbReference>
<dbReference type="GO" id="GO:0043490">
    <property type="term" value="P:malate-aspartate shuttle"/>
    <property type="evidence" value="ECO:0000318"/>
    <property type="project" value="GO_Central"/>
</dbReference>
<dbReference type="FunFam" id="1.50.40.10:FF:000004">
    <property type="entry name" value="Calcium-binding mitochondrial carrier protein Aralar1"/>
    <property type="match status" value="1"/>
</dbReference>
<dbReference type="Gene3D" id="1.50.40.10">
    <property type="entry name" value="Mitochondrial carrier domain"/>
    <property type="match status" value="1"/>
</dbReference>
<dbReference type="InterPro" id="IPR002067">
    <property type="entry name" value="Mit_carrier"/>
</dbReference>
<dbReference type="InterPro" id="IPR051028">
    <property type="entry name" value="Mito_Solute_Carrier"/>
</dbReference>
<dbReference type="InterPro" id="IPR018108">
    <property type="entry name" value="Mitochondrial_sb/sol_carrier"/>
</dbReference>
<dbReference type="InterPro" id="IPR023395">
    <property type="entry name" value="Mt_carrier_dom_sf"/>
</dbReference>
<dbReference type="PANTHER" id="PTHR45678:SF9">
    <property type="entry name" value="CALCIUM-BINDING MITOCHONDRIAL CARRIER PROTEIN ARALAR1"/>
    <property type="match status" value="1"/>
</dbReference>
<dbReference type="PANTHER" id="PTHR45678">
    <property type="entry name" value="MITOCHONDRIAL 2-OXODICARBOXYLATE CARRIER 1-RELATED"/>
    <property type="match status" value="1"/>
</dbReference>
<dbReference type="Pfam" id="PF00153">
    <property type="entry name" value="Mito_carr"/>
    <property type="match status" value="3"/>
</dbReference>
<dbReference type="PRINTS" id="PR00926">
    <property type="entry name" value="MITOCARRIER"/>
</dbReference>
<dbReference type="SUPFAM" id="SSF103506">
    <property type="entry name" value="Mitochondrial carrier"/>
    <property type="match status" value="1"/>
</dbReference>
<dbReference type="PROSITE" id="PS50920">
    <property type="entry name" value="SOLCAR"/>
    <property type="match status" value="3"/>
</dbReference>
<comment type="function">
    <text evidence="3 4">Calcium-dependent mitochondrial aspartate and glutamate carrier. Transport of glutamate in mitochondria is required for mitochondrial transamination reactions and ornithine synthesis. Plays also a role in malate-aspartate NADH shuttle, which is critical for growth on acetate and fatty acids.</text>
</comment>
<comment type="subcellular location">
    <subcellularLocation>
        <location evidence="2 3">Mitochondrion inner membrane</location>
        <topology evidence="2 3">Multi-pass membrane protein</topology>
    </subcellularLocation>
</comment>
<comment type="similarity">
    <text evidence="5">Belongs to the mitochondrial carrier (TC 2.A.29) family.</text>
</comment>
<organism>
    <name type="scientific">Saccharomyces cerevisiae (strain ATCC 204508 / S288c)</name>
    <name type="common">Baker's yeast</name>
    <dbReference type="NCBI Taxonomy" id="559292"/>
    <lineage>
        <taxon>Eukaryota</taxon>
        <taxon>Fungi</taxon>
        <taxon>Dikarya</taxon>
        <taxon>Ascomycota</taxon>
        <taxon>Saccharomycotina</taxon>
        <taxon>Saccharomycetes</taxon>
        <taxon>Saccharomycetales</taxon>
        <taxon>Saccharomycetaceae</taxon>
        <taxon>Saccharomyces</taxon>
    </lineage>
</organism>
<sequence>MEQINSNSRKKKQQLEVFKYFASVLTKEDKPISISNGMLDMPTVNSSKLTAGNGKPDTEKLTGELILTYDDFIELISSSKTIYSKFTDHSFNLNQIPKNVFGCIFFAIDEQNKGYLTLNDWFYFNNLLEYDNYHLIILYEFFRKFDVENLKAKQKKELGSSSFNLKAADDRIKSINYGNRFLSFDDLLLNLNQFKDTIRLLHESIDDNFVKDNKLLLDWNDFRFLKFYKCYHENEEYLSLNSLVTILQNDLKNEKIFIGFDRLAQMDSQGHRLALSKNQLTYLLRLFYSHRVSADIFSSLNLSNTELLKADNNSIPYNVFKDIFYLFQNFDLLNQIFHKYVTENNLNEQDIREQIVTKNDFMTVLNAQYNKVNNIIEFSPSQINLLFSIVANSKENRRLRKRNQDRDDELLNDHHYDSDIDFFIHNEYLHGVSRSRKNLESFNDYYHDLSDGFDQDSGVKKASKASTGLFESVFGGKKDKATMRSDLTIEDFMKILNPNYLNDLVHQMELQKNQNESLYINYYFYPIFDSLYNFSLGSIAGCIGATVVYPIDFIKTRMQAQRSLAQYKNSIDCLLKIISREGIKGLYSGLGPQLIGVAPEKAIKLTVNDFMRNRLTDKNGKLSLFPEIISGASAGACQVIFTNPLEIVKIRLQVQSDYVGENIQQANETATQIVKKLGLRGLYNGVAACLMRDVPFSAIYFPTYAHLKKDLFDFDPNDKTKRNRLKTWELLTAGAIAGMPAAFLTTPFDVIKTRLQIDPRKGETKYNGIFHAIRTILKEESFRSFFKGGGARVLRSSPQFGFTLAAYELFKGFIPSPDNKLKSREGRKRFCIDDDAGNEETVVHSNGELPQQKFYSDDRKHANYYYKSCQIAKTFIDLDNNFSRFDSSVYKNFQEHLRSING</sequence>
<gene>
    <name type="primary">AGC1</name>
    <name type="ordered locus">YPR021C</name>
    <name type="ORF">YP9367.01C</name>
</gene>
<feature type="chain" id="PRO_0000227601" description="Mitochondrial aspartate-glutamate transporter AGC1">
    <location>
        <begin position="1"/>
        <end position="902"/>
    </location>
</feature>
<feature type="transmembrane region" description="Helical; Name=1" evidence="1">
    <location>
        <begin position="534"/>
        <end position="554"/>
    </location>
</feature>
<feature type="transmembrane region" description="Helical; Name=2" evidence="1">
    <location>
        <begin position="591"/>
        <end position="611"/>
    </location>
</feature>
<feature type="transmembrane region" description="Helical; Name=3" evidence="1">
    <location>
        <begin position="622"/>
        <end position="642"/>
    </location>
</feature>
<feature type="transmembrane region" description="Helical; Name=4" evidence="1">
    <location>
        <begin position="681"/>
        <end position="702"/>
    </location>
</feature>
<feature type="transmembrane region" description="Helical; Name=5" evidence="1">
    <location>
        <begin position="731"/>
        <end position="751"/>
    </location>
</feature>
<feature type="transmembrane region" description="Helical; Name=6" evidence="1">
    <location>
        <begin position="786"/>
        <end position="806"/>
    </location>
</feature>
<feature type="repeat" description="Solcar 1">
    <location>
        <begin position="528"/>
        <end position="614"/>
    </location>
</feature>
<feature type="repeat" description="Solcar 2">
    <location>
        <begin position="622"/>
        <end position="710"/>
    </location>
</feature>
<feature type="repeat" description="Solcar 3">
    <location>
        <begin position="725"/>
        <end position="813"/>
    </location>
</feature>
<proteinExistence type="inferred from homology"/>
<protein>
    <recommendedName>
        <fullName>Mitochondrial aspartate-glutamate transporter AGC1</fullName>
    </recommendedName>
    <alternativeName>
        <fullName>Aspartate-glutamate carrier 1</fullName>
    </alternativeName>
</protein>
<keyword id="KW-0029">Amino-acid transport</keyword>
<keyword id="KW-0106">Calcium</keyword>
<keyword id="KW-0472">Membrane</keyword>
<keyword id="KW-0496">Mitochondrion</keyword>
<keyword id="KW-0999">Mitochondrion inner membrane</keyword>
<keyword id="KW-1185">Reference proteome</keyword>
<keyword id="KW-0677">Repeat</keyword>
<keyword id="KW-0812">Transmembrane</keyword>
<keyword id="KW-1133">Transmembrane helix</keyword>
<keyword id="KW-0813">Transport</keyword>
<name>AGC1_YEAST</name>
<evidence type="ECO:0000255" key="1"/>
<evidence type="ECO:0000269" key="2">
    <source>
    </source>
</evidence>
<evidence type="ECO:0000269" key="3">
    <source>
    </source>
</evidence>
<evidence type="ECO:0000269" key="4">
    <source>
    </source>
</evidence>
<evidence type="ECO:0000305" key="5"/>
<reference key="1">
    <citation type="journal article" date="1997" name="Nature">
        <title>The nucleotide sequence of Saccharomyces cerevisiae chromosome XVI.</title>
        <authorList>
            <person name="Bussey H."/>
            <person name="Storms R.K."/>
            <person name="Ahmed A."/>
            <person name="Albermann K."/>
            <person name="Allen E."/>
            <person name="Ansorge W."/>
            <person name="Araujo R."/>
            <person name="Aparicio A."/>
            <person name="Barrell B.G."/>
            <person name="Badcock K."/>
            <person name="Benes V."/>
            <person name="Botstein D."/>
            <person name="Bowman S."/>
            <person name="Brueckner M."/>
            <person name="Carpenter J."/>
            <person name="Cherry J.M."/>
            <person name="Chung E."/>
            <person name="Churcher C.M."/>
            <person name="Coster F."/>
            <person name="Davis K."/>
            <person name="Davis R.W."/>
            <person name="Dietrich F.S."/>
            <person name="Delius H."/>
            <person name="DiPaolo T."/>
            <person name="Dubois E."/>
            <person name="Duesterhoeft A."/>
            <person name="Duncan M."/>
            <person name="Floeth M."/>
            <person name="Fortin N."/>
            <person name="Friesen J.D."/>
            <person name="Fritz C."/>
            <person name="Goffeau A."/>
            <person name="Hall J."/>
            <person name="Hebling U."/>
            <person name="Heumann K."/>
            <person name="Hilbert H."/>
            <person name="Hillier L.W."/>
            <person name="Hunicke-Smith S."/>
            <person name="Hyman R.W."/>
            <person name="Johnston M."/>
            <person name="Kalman S."/>
            <person name="Kleine K."/>
            <person name="Komp C."/>
            <person name="Kurdi O."/>
            <person name="Lashkari D."/>
            <person name="Lew H."/>
            <person name="Lin A."/>
            <person name="Lin D."/>
            <person name="Louis E.J."/>
            <person name="Marathe R."/>
            <person name="Messenguy F."/>
            <person name="Mewes H.-W."/>
            <person name="Mirtipati S."/>
            <person name="Moestl D."/>
            <person name="Mueller-Auer S."/>
            <person name="Namath A."/>
            <person name="Nentwich U."/>
            <person name="Oefner P."/>
            <person name="Pearson D."/>
            <person name="Petel F.X."/>
            <person name="Pohl T.M."/>
            <person name="Purnelle B."/>
            <person name="Rajandream M.A."/>
            <person name="Rechmann S."/>
            <person name="Rieger M."/>
            <person name="Riles L."/>
            <person name="Roberts D."/>
            <person name="Schaefer M."/>
            <person name="Scharfe M."/>
            <person name="Scherens B."/>
            <person name="Schramm S."/>
            <person name="Schroeder M."/>
            <person name="Sdicu A.-M."/>
            <person name="Tettelin H."/>
            <person name="Urrestarazu L.A."/>
            <person name="Ushinsky S."/>
            <person name="Vierendeels F."/>
            <person name="Vissers S."/>
            <person name="Voss H."/>
            <person name="Walsh S.V."/>
            <person name="Wambutt R."/>
            <person name="Wang Y."/>
            <person name="Wedler E."/>
            <person name="Wedler H."/>
            <person name="Winnett E."/>
            <person name="Zhong W.-W."/>
            <person name="Zollner A."/>
            <person name="Vo D.H."/>
            <person name="Hani J."/>
        </authorList>
    </citation>
    <scope>NUCLEOTIDE SEQUENCE [LARGE SCALE GENOMIC DNA]</scope>
    <source>
        <strain>ATCC 204508 / S288c</strain>
    </source>
</reference>
<reference key="2">
    <citation type="journal article" date="2014" name="G3 (Bethesda)">
        <title>The reference genome sequence of Saccharomyces cerevisiae: Then and now.</title>
        <authorList>
            <person name="Engel S.R."/>
            <person name="Dietrich F.S."/>
            <person name="Fisk D.G."/>
            <person name="Binkley G."/>
            <person name="Balakrishnan R."/>
            <person name="Costanzo M.C."/>
            <person name="Dwight S.S."/>
            <person name="Hitz B.C."/>
            <person name="Karra K."/>
            <person name="Nash R.S."/>
            <person name="Weng S."/>
            <person name="Wong E.D."/>
            <person name="Lloyd P."/>
            <person name="Skrzypek M.S."/>
            <person name="Miyasato S.R."/>
            <person name="Simison M."/>
            <person name="Cherry J.M."/>
        </authorList>
    </citation>
    <scope>GENOME REANNOTATION</scope>
    <source>
        <strain>ATCC 204508 / S288c</strain>
    </source>
</reference>
<reference key="3">
    <citation type="journal article" date="1997" name="Yeast">
        <title>Phylogenetic classification of the mitochondrial carrier family of Saccharomyces cerevisiae.</title>
        <authorList>
            <person name="el Moualij B."/>
            <person name="Duyckaerts C."/>
            <person name="Lamotte-Brasseur J."/>
            <person name="Sluse F.E."/>
        </authorList>
    </citation>
    <scope>FUNCTION</scope>
</reference>
<reference key="4">
    <citation type="journal article" date="2003" name="Mol. Microbiol.">
        <title>Identification and metabolic role of the mitochondrial aspartate-glutamate transporter in Saccharomyces cerevisiae.</title>
        <authorList>
            <person name="Cavero S."/>
            <person name="Vozza A."/>
            <person name="del Arco A."/>
            <person name="Palmieri L."/>
            <person name="Villa A."/>
            <person name="Blanco E."/>
            <person name="Runswick M.J."/>
            <person name="Walker J.E."/>
            <person name="Cerdan S."/>
            <person name="Palmieri F."/>
            <person name="Satrustegui J."/>
        </authorList>
    </citation>
    <scope>FUNCTION</scope>
    <scope>SUBCELLULAR LOCATION</scope>
</reference>
<reference key="5">
    <citation type="journal article" date="2003" name="Proc. Natl. Acad. Sci. U.S.A.">
        <title>The proteome of Saccharomyces cerevisiae mitochondria.</title>
        <authorList>
            <person name="Sickmann A."/>
            <person name="Reinders J."/>
            <person name="Wagner Y."/>
            <person name="Joppich C."/>
            <person name="Zahedi R.P."/>
            <person name="Meyer H.E."/>
            <person name="Schoenfisch B."/>
            <person name="Perschil I."/>
            <person name="Chacinska A."/>
            <person name="Guiard B."/>
            <person name="Rehling P."/>
            <person name="Pfanner N."/>
            <person name="Meisinger C."/>
        </authorList>
    </citation>
    <scope>SUBCELLULAR LOCATION [LARGE SCALE ANALYSIS]</scope>
    <source>
        <strain>ATCC 76625 / YPH499</strain>
    </source>
</reference>